<sequence length="500" mass="56559">MDRRLLLSALLFIALACSSNRVHGALNRHSFPEGFLFGTGTSAYQYEGAVDKRGQNIWDTFSRIPGKIADGSNADIANDFYHRYKEDLNLITAMNMDSFRFSIAWSRILPNGTISGGINKEGVEFYNSLINEVIAKGLKPFVTIFHFDTPQALEDKYGGFLSENIVKDYVDYADLCFSLFGDRVKLWNTFNEPTIFCMNGYATGIMAPGRCSPYASASCAAGGDSGREPYVAGHHLLVAHAEAVRLYRARYRAAHGGEVGITQVSHWFEPYDAGSAADRRARRRALDFMLGWFMHPVAHGEYPPAMRRLVGGRLPAFTAEQSEMLRGSFDFIGLNYYTSNYAVAAPPPNKLHPSYLTDNWVNATGYRNSIPIGPPAYTPIFFNYPPGLRELLLYVKRRYNNPTIYITENGTDEANNSTIPISEALKDETRIGFHYKHLQFVHKAIQEGVKVKGYFTWTFMDCFEFGDGFKDRFGLIYVDRATLARFRKKSSYWFADFLRR</sequence>
<proteinExistence type="evidence at transcript level"/>
<dbReference type="EC" id="3.2.1.21" evidence="2"/>
<dbReference type="EMBL" id="AP005816">
    <property type="protein sequence ID" value="BAD10672.1"/>
    <property type="molecule type" value="Genomic_DNA"/>
</dbReference>
<dbReference type="EMBL" id="AP006049">
    <property type="protein sequence ID" value="BAD10731.1"/>
    <property type="molecule type" value="Genomic_DNA"/>
</dbReference>
<dbReference type="EMBL" id="AP008214">
    <property type="protein sequence ID" value="BAF24116.2"/>
    <property type="status" value="ALT_INIT"/>
    <property type="molecule type" value="Genomic_DNA"/>
</dbReference>
<dbReference type="EMBL" id="AP014964">
    <property type="protein sequence ID" value="BAT06184.1"/>
    <property type="molecule type" value="Genomic_DNA"/>
</dbReference>
<dbReference type="EMBL" id="AK105908">
    <property type="protein sequence ID" value="BAG97431.1"/>
    <property type="molecule type" value="mRNA"/>
</dbReference>
<dbReference type="RefSeq" id="XP_015648468.1">
    <property type="nucleotide sequence ID" value="XM_015792982.1"/>
</dbReference>
<dbReference type="RefSeq" id="XP_015648469.1">
    <property type="nucleotide sequence ID" value="XM_015792983.1"/>
</dbReference>
<dbReference type="SMR" id="Q7EXZ4"/>
<dbReference type="FunCoup" id="Q7EXZ4">
    <property type="interactions" value="318"/>
</dbReference>
<dbReference type="STRING" id="39947.Q7EXZ4"/>
<dbReference type="GlyCosmos" id="Q7EXZ4">
    <property type="glycosylation" value="5 sites, No reported glycans"/>
</dbReference>
<dbReference type="PaxDb" id="39947-Q7EXZ4"/>
<dbReference type="EnsemblPlants" id="Os08t0509400-01">
    <property type="protein sequence ID" value="Os08t0509400-01"/>
    <property type="gene ID" value="Os08g0509400"/>
</dbReference>
<dbReference type="Gramene" id="Os08t0509400-01">
    <property type="protein sequence ID" value="Os08t0509400-01"/>
    <property type="gene ID" value="Os08g0509400"/>
</dbReference>
<dbReference type="KEGG" id="dosa:Os08g0509400"/>
<dbReference type="eggNOG" id="KOG0626">
    <property type="taxonomic scope" value="Eukaryota"/>
</dbReference>
<dbReference type="HOGENOM" id="CLU_001859_1_0_1"/>
<dbReference type="InParanoid" id="Q7EXZ4"/>
<dbReference type="OMA" id="CTMNEPW"/>
<dbReference type="OrthoDB" id="65569at2759"/>
<dbReference type="Proteomes" id="UP000000763">
    <property type="component" value="Chromosome 8"/>
</dbReference>
<dbReference type="Proteomes" id="UP000059680">
    <property type="component" value="Chromosome 8"/>
</dbReference>
<dbReference type="GO" id="GO:0033907">
    <property type="term" value="F:beta-D-fucosidase activity"/>
    <property type="evidence" value="ECO:0007669"/>
    <property type="project" value="UniProtKB-ARBA"/>
</dbReference>
<dbReference type="GO" id="GO:0004565">
    <property type="term" value="F:beta-galactosidase activity"/>
    <property type="evidence" value="ECO:0007669"/>
    <property type="project" value="UniProtKB-ARBA"/>
</dbReference>
<dbReference type="GO" id="GO:0008422">
    <property type="term" value="F:beta-glucosidase activity"/>
    <property type="evidence" value="ECO:0000318"/>
    <property type="project" value="GO_Central"/>
</dbReference>
<dbReference type="GO" id="GO:0005975">
    <property type="term" value="P:carbohydrate metabolic process"/>
    <property type="evidence" value="ECO:0007669"/>
    <property type="project" value="InterPro"/>
</dbReference>
<dbReference type="FunFam" id="3.20.20.80:FF:000020">
    <property type="entry name" value="Beta-glucosidase 12"/>
    <property type="match status" value="1"/>
</dbReference>
<dbReference type="Gene3D" id="3.20.20.80">
    <property type="entry name" value="Glycosidases"/>
    <property type="match status" value="1"/>
</dbReference>
<dbReference type="InterPro" id="IPR001360">
    <property type="entry name" value="Glyco_hydro_1"/>
</dbReference>
<dbReference type="InterPro" id="IPR033132">
    <property type="entry name" value="Glyco_hydro_1_N_CS"/>
</dbReference>
<dbReference type="InterPro" id="IPR017853">
    <property type="entry name" value="Glycoside_hydrolase_SF"/>
</dbReference>
<dbReference type="PANTHER" id="PTHR10353:SF65">
    <property type="entry name" value="BETA-GLUCOSIDASE 27"/>
    <property type="match status" value="1"/>
</dbReference>
<dbReference type="PANTHER" id="PTHR10353">
    <property type="entry name" value="GLYCOSYL HYDROLASE"/>
    <property type="match status" value="1"/>
</dbReference>
<dbReference type="Pfam" id="PF00232">
    <property type="entry name" value="Glyco_hydro_1"/>
    <property type="match status" value="1"/>
</dbReference>
<dbReference type="PRINTS" id="PR00131">
    <property type="entry name" value="GLHYDRLASE1"/>
</dbReference>
<dbReference type="SUPFAM" id="SSF51445">
    <property type="entry name" value="(Trans)glycosidases"/>
    <property type="match status" value="1"/>
</dbReference>
<dbReference type="PROSITE" id="PS00653">
    <property type="entry name" value="GLYCOSYL_HYDROL_F1_2"/>
    <property type="match status" value="1"/>
</dbReference>
<evidence type="ECO:0000250" key="1">
    <source>
        <dbReference type="UniProtKB" id="Q1XH05"/>
    </source>
</evidence>
<evidence type="ECO:0000250" key="2">
    <source>
        <dbReference type="UniProtKB" id="Q75I94"/>
    </source>
</evidence>
<evidence type="ECO:0000250" key="3">
    <source>
        <dbReference type="UniProtKB" id="Q7XSK0"/>
    </source>
</evidence>
<evidence type="ECO:0000250" key="4">
    <source>
        <dbReference type="UniProtKB" id="Q8L7J2"/>
    </source>
</evidence>
<evidence type="ECO:0000250" key="5">
    <source>
        <dbReference type="UniProtKB" id="Q9SPP9"/>
    </source>
</evidence>
<evidence type="ECO:0000255" key="6"/>
<evidence type="ECO:0000255" key="7">
    <source>
        <dbReference type="PROSITE-ProRule" id="PRU00498"/>
    </source>
</evidence>
<evidence type="ECO:0000305" key="8"/>
<reference key="1">
    <citation type="journal article" date="2005" name="Nature">
        <title>The map-based sequence of the rice genome.</title>
        <authorList>
            <consortium name="International rice genome sequencing project (IRGSP)"/>
        </authorList>
    </citation>
    <scope>NUCLEOTIDE SEQUENCE [LARGE SCALE GENOMIC DNA]</scope>
    <source>
        <strain>cv. Nipponbare</strain>
    </source>
</reference>
<reference key="2">
    <citation type="journal article" date="2008" name="Nucleic Acids Res.">
        <title>The rice annotation project database (RAP-DB): 2008 update.</title>
        <authorList>
            <consortium name="The rice annotation project (RAP)"/>
        </authorList>
    </citation>
    <scope>GENOME REANNOTATION</scope>
    <source>
        <strain>cv. Nipponbare</strain>
    </source>
</reference>
<reference key="3">
    <citation type="journal article" date="2013" name="Rice">
        <title>Improvement of the Oryza sativa Nipponbare reference genome using next generation sequence and optical map data.</title>
        <authorList>
            <person name="Kawahara Y."/>
            <person name="de la Bastide M."/>
            <person name="Hamilton J.P."/>
            <person name="Kanamori H."/>
            <person name="McCombie W.R."/>
            <person name="Ouyang S."/>
            <person name="Schwartz D.C."/>
            <person name="Tanaka T."/>
            <person name="Wu J."/>
            <person name="Zhou S."/>
            <person name="Childs K.L."/>
            <person name="Davidson R.M."/>
            <person name="Lin H."/>
            <person name="Quesada-Ocampo L."/>
            <person name="Vaillancourt B."/>
            <person name="Sakai H."/>
            <person name="Lee S.S."/>
            <person name="Kim J."/>
            <person name="Numa H."/>
            <person name="Itoh T."/>
            <person name="Buell C.R."/>
            <person name="Matsumoto T."/>
        </authorList>
    </citation>
    <scope>GENOME REANNOTATION</scope>
    <source>
        <strain>cv. Nipponbare</strain>
    </source>
</reference>
<reference key="4">
    <citation type="journal article" date="2003" name="Science">
        <title>Collection, mapping, and annotation of over 28,000 cDNA clones from japonica rice.</title>
        <authorList>
            <consortium name="The rice full-length cDNA consortium"/>
        </authorList>
    </citation>
    <scope>NUCLEOTIDE SEQUENCE [LARGE SCALE MRNA]</scope>
    <source>
        <strain>cv. Nipponbare</strain>
    </source>
</reference>
<reference key="5">
    <citation type="journal article" date="2006" name="BMC Plant Biol.">
        <title>Analysis of rice glycosyl hydrolase family 1 and expression of Os4bglu12 beta-glucosidase.</title>
        <authorList>
            <person name="Opassiri R."/>
            <person name="Pomthong B."/>
            <person name="Onkoksoong T."/>
            <person name="Akiyama T."/>
            <person name="Esen A."/>
            <person name="Ketudat Cairns J.R."/>
        </authorList>
    </citation>
    <scope>GENE FAMILY</scope>
    <scope>NOMENCLATURE</scope>
</reference>
<keyword id="KW-1015">Disulfide bond</keyword>
<keyword id="KW-0325">Glycoprotein</keyword>
<keyword id="KW-0326">Glycosidase</keyword>
<keyword id="KW-0378">Hydrolase</keyword>
<keyword id="KW-1185">Reference proteome</keyword>
<keyword id="KW-0732">Signal</keyword>
<accession>Q7EXZ4</accession>
<accession>A0A0P0XHI3</accession>
<accession>Q0J4J9</accession>
<organism>
    <name type="scientific">Oryza sativa subsp. japonica</name>
    <name type="common">Rice</name>
    <dbReference type="NCBI Taxonomy" id="39947"/>
    <lineage>
        <taxon>Eukaryota</taxon>
        <taxon>Viridiplantae</taxon>
        <taxon>Streptophyta</taxon>
        <taxon>Embryophyta</taxon>
        <taxon>Tracheophyta</taxon>
        <taxon>Spermatophyta</taxon>
        <taxon>Magnoliopsida</taxon>
        <taxon>Liliopsida</taxon>
        <taxon>Poales</taxon>
        <taxon>Poaceae</taxon>
        <taxon>BOP clade</taxon>
        <taxon>Oryzoideae</taxon>
        <taxon>Oryzeae</taxon>
        <taxon>Oryzinae</taxon>
        <taxon>Oryza</taxon>
        <taxon>Oryza sativa</taxon>
    </lineage>
</organism>
<comment type="catalytic activity">
    <reaction evidence="2">
        <text>Hydrolysis of terminal, non-reducing beta-D-glucosyl residues with release of beta-D-glucose.</text>
        <dbReference type="EC" id="3.2.1.21"/>
    </reaction>
</comment>
<comment type="similarity">
    <text evidence="8">Belongs to the glycosyl hydrolase 1 family.</text>
</comment>
<comment type="sequence caution" evidence="8">
    <conflict type="erroneous initiation">
        <sequence resource="EMBL-CDS" id="BAF24116"/>
    </conflict>
    <text>Extended N-terminus.</text>
</comment>
<name>BGL28_ORYSJ</name>
<gene>
    <name type="primary">BGLU28</name>
    <name type="ordered locus">Os08g0509400</name>
    <name type="ordered locus">LOC_Os08g39870</name>
    <name type="ORF">B1168A08.31</name>
    <name type="ORF">OSJNBa0016N23.106</name>
</gene>
<protein>
    <recommendedName>
        <fullName>Beta-glucosidase 28</fullName>
        <shortName>Os8bglu28</shortName>
        <ecNumber evidence="2">3.2.1.21</ecNumber>
    </recommendedName>
</protein>
<feature type="signal peptide" evidence="6">
    <location>
        <begin position="1"/>
        <end position="24"/>
    </location>
</feature>
<feature type="chain" id="PRO_0000390345" description="Beta-glucosidase 28">
    <location>
        <begin position="25"/>
        <end position="500"/>
    </location>
</feature>
<feature type="active site" description="Proton donor" evidence="3">
    <location>
        <position position="192"/>
    </location>
</feature>
<feature type="active site" description="Nucleophile" evidence="3">
    <location>
        <position position="408"/>
    </location>
</feature>
<feature type="binding site" evidence="3">
    <location>
        <position position="45"/>
    </location>
    <ligand>
        <name>a beta-D-glucoside</name>
        <dbReference type="ChEBI" id="CHEBI:22798"/>
    </ligand>
</feature>
<feature type="binding site" evidence="3">
    <location>
        <position position="146"/>
    </location>
    <ligand>
        <name>a beta-D-glucoside</name>
        <dbReference type="ChEBI" id="CHEBI:22798"/>
    </ligand>
</feature>
<feature type="binding site" evidence="3">
    <location>
        <begin position="191"/>
        <end position="192"/>
    </location>
    <ligand>
        <name>a beta-D-glucoside</name>
        <dbReference type="ChEBI" id="CHEBI:22798"/>
    </ligand>
</feature>
<feature type="binding site" evidence="3">
    <location>
        <position position="337"/>
    </location>
    <ligand>
        <name>a beta-D-glucoside</name>
        <dbReference type="ChEBI" id="CHEBI:22798"/>
    </ligand>
</feature>
<feature type="binding site" evidence="5">
    <location>
        <position position="408"/>
    </location>
    <ligand>
        <name>a beta-D-glucoside</name>
        <dbReference type="ChEBI" id="CHEBI:22798"/>
    </ligand>
</feature>
<feature type="binding site" evidence="3">
    <location>
        <position position="457"/>
    </location>
    <ligand>
        <name>a beta-D-glucoside</name>
        <dbReference type="ChEBI" id="CHEBI:22798"/>
    </ligand>
</feature>
<feature type="binding site" evidence="4">
    <location>
        <begin position="464"/>
        <end position="465"/>
    </location>
    <ligand>
        <name>a beta-D-glucoside</name>
        <dbReference type="ChEBI" id="CHEBI:22798"/>
    </ligand>
</feature>
<feature type="binding site" evidence="1">
    <location>
        <position position="473"/>
    </location>
    <ligand>
        <name>a beta-D-glucoside</name>
        <dbReference type="ChEBI" id="CHEBI:22798"/>
    </ligand>
</feature>
<feature type="glycosylation site" description="N-linked (GlcNAc...) asparagine" evidence="7">
    <location>
        <position position="111"/>
    </location>
</feature>
<feature type="glycosylation site" description="N-linked (GlcNAc...) asparagine" evidence="7">
    <location>
        <position position="362"/>
    </location>
</feature>
<feature type="glycosylation site" description="N-linked (GlcNAc...) asparagine" evidence="7">
    <location>
        <position position="409"/>
    </location>
</feature>
<feature type="glycosylation site" description="N-linked (GlcNAc...) asparagine" evidence="7">
    <location>
        <position position="415"/>
    </location>
</feature>
<feature type="glycosylation site" description="N-linked (GlcNAc...) asparagine" evidence="7">
    <location>
        <position position="416"/>
    </location>
</feature>
<feature type="disulfide bond" evidence="3">
    <location>
        <begin position="211"/>
        <end position="219"/>
    </location>
</feature>